<gene>
    <name type="ordered locus">RHA1_ro04210</name>
</gene>
<organism>
    <name type="scientific">Rhodococcus jostii (strain RHA1)</name>
    <dbReference type="NCBI Taxonomy" id="101510"/>
    <lineage>
        <taxon>Bacteria</taxon>
        <taxon>Bacillati</taxon>
        <taxon>Actinomycetota</taxon>
        <taxon>Actinomycetes</taxon>
        <taxon>Mycobacteriales</taxon>
        <taxon>Nocardiaceae</taxon>
        <taxon>Rhodococcus</taxon>
    </lineage>
</organism>
<keyword id="KW-0963">Cytoplasm</keyword>
<keyword id="KW-0238">DNA-binding</keyword>
<reference key="1">
    <citation type="journal article" date="2006" name="Proc. Natl. Acad. Sci. U.S.A.">
        <title>The complete genome of Rhodococcus sp. RHA1 provides insights into a catabolic powerhouse.</title>
        <authorList>
            <person name="McLeod M.P."/>
            <person name="Warren R.L."/>
            <person name="Hsiao W.W.L."/>
            <person name="Araki N."/>
            <person name="Myhre M."/>
            <person name="Fernandes C."/>
            <person name="Miyazawa D."/>
            <person name="Wong W."/>
            <person name="Lillquist A.L."/>
            <person name="Wang D."/>
            <person name="Dosanjh M."/>
            <person name="Hara H."/>
            <person name="Petrescu A."/>
            <person name="Morin R.D."/>
            <person name="Yang G."/>
            <person name="Stott J.M."/>
            <person name="Schein J.E."/>
            <person name="Shin H."/>
            <person name="Smailus D."/>
            <person name="Siddiqui A.S."/>
            <person name="Marra M.A."/>
            <person name="Jones S.J.M."/>
            <person name="Holt R."/>
            <person name="Brinkman F.S.L."/>
            <person name="Miyauchi K."/>
            <person name="Fukuda M."/>
            <person name="Davies J.E."/>
            <person name="Mohn W.W."/>
            <person name="Eltis L.D."/>
        </authorList>
    </citation>
    <scope>NUCLEOTIDE SEQUENCE [LARGE SCALE GENOMIC DNA]</scope>
    <source>
        <strain>RHA1</strain>
    </source>
</reference>
<protein>
    <recommendedName>
        <fullName evidence="1">Nucleoid-associated protein RHA1_ro04210</fullName>
    </recommendedName>
</protein>
<feature type="chain" id="PRO_1000114639" description="Nucleoid-associated protein RHA1_ro04210">
    <location>
        <begin position="1"/>
        <end position="113"/>
    </location>
</feature>
<accession>Q0S8Y5</accession>
<comment type="function">
    <text evidence="1">Binds to DNA and alters its conformation. May be involved in regulation of gene expression, nucleoid organization and DNA protection.</text>
</comment>
<comment type="subunit">
    <text evidence="1">Homodimer.</text>
</comment>
<comment type="subcellular location">
    <subcellularLocation>
        <location evidence="1">Cytoplasm</location>
        <location evidence="1">Nucleoid</location>
    </subcellularLocation>
</comment>
<comment type="similarity">
    <text evidence="1">Belongs to the YbaB/EbfC family.</text>
</comment>
<dbReference type="EMBL" id="CP000431">
    <property type="protein sequence ID" value="ABG96001.1"/>
    <property type="molecule type" value="Genomic_DNA"/>
</dbReference>
<dbReference type="RefSeq" id="WP_009477269.1">
    <property type="nucleotide sequence ID" value="NC_008268.1"/>
</dbReference>
<dbReference type="SMR" id="Q0S8Y5"/>
<dbReference type="KEGG" id="rha:RHA1_ro04210"/>
<dbReference type="eggNOG" id="COG0718">
    <property type="taxonomic scope" value="Bacteria"/>
</dbReference>
<dbReference type="HOGENOM" id="CLU_140930_4_0_11"/>
<dbReference type="Proteomes" id="UP000008710">
    <property type="component" value="Chromosome"/>
</dbReference>
<dbReference type="GO" id="GO:0043590">
    <property type="term" value="C:bacterial nucleoid"/>
    <property type="evidence" value="ECO:0007669"/>
    <property type="project" value="UniProtKB-UniRule"/>
</dbReference>
<dbReference type="GO" id="GO:0005829">
    <property type="term" value="C:cytosol"/>
    <property type="evidence" value="ECO:0007669"/>
    <property type="project" value="TreeGrafter"/>
</dbReference>
<dbReference type="GO" id="GO:0003677">
    <property type="term" value="F:DNA binding"/>
    <property type="evidence" value="ECO:0007669"/>
    <property type="project" value="UniProtKB-UniRule"/>
</dbReference>
<dbReference type="FunFam" id="3.30.1310.10:FF:000003">
    <property type="entry name" value="Nucleoid-associated protein MRA_3753"/>
    <property type="match status" value="1"/>
</dbReference>
<dbReference type="Gene3D" id="3.30.1310.10">
    <property type="entry name" value="Nucleoid-associated protein YbaB-like domain"/>
    <property type="match status" value="1"/>
</dbReference>
<dbReference type="HAMAP" id="MF_00274">
    <property type="entry name" value="DNA_YbaB_EbfC"/>
    <property type="match status" value="1"/>
</dbReference>
<dbReference type="InterPro" id="IPR036894">
    <property type="entry name" value="YbaB-like_sf"/>
</dbReference>
<dbReference type="InterPro" id="IPR004401">
    <property type="entry name" value="YbaB/EbfC"/>
</dbReference>
<dbReference type="NCBIfam" id="TIGR00103">
    <property type="entry name" value="DNA_YbaB_EbfC"/>
    <property type="match status" value="1"/>
</dbReference>
<dbReference type="PANTHER" id="PTHR33449">
    <property type="entry name" value="NUCLEOID-ASSOCIATED PROTEIN YBAB"/>
    <property type="match status" value="1"/>
</dbReference>
<dbReference type="PANTHER" id="PTHR33449:SF1">
    <property type="entry name" value="NUCLEOID-ASSOCIATED PROTEIN YBAB"/>
    <property type="match status" value="1"/>
</dbReference>
<dbReference type="Pfam" id="PF02575">
    <property type="entry name" value="YbaB_DNA_bd"/>
    <property type="match status" value="1"/>
</dbReference>
<dbReference type="PIRSF" id="PIRSF004555">
    <property type="entry name" value="UCP004555"/>
    <property type="match status" value="1"/>
</dbReference>
<dbReference type="SUPFAM" id="SSF82607">
    <property type="entry name" value="YbaB-like"/>
    <property type="match status" value="1"/>
</dbReference>
<sequence>MQPGGQPDMSALLAQAQQMQQQLMAAQQEMAEAEVTGQAGGGLVTATVKGTGEVVGLKIDPKVVDPDDVETLQDLVIGAIEDASNKAQEIAAQKLGPLAGGFGGGGLPGLPGF</sequence>
<evidence type="ECO:0000255" key="1">
    <source>
        <dbReference type="HAMAP-Rule" id="MF_00274"/>
    </source>
</evidence>
<name>Y4210_RHOJR</name>
<proteinExistence type="inferred from homology"/>